<comment type="function">
    <text evidence="1 3">Main toxin of bee venom with strong hemolytic activity and antimicrobial activity. It has enhancing effects on bee venom phospholipase A2 activity. This amphipathic toxin binds to negatively charged membrane surface and forms pore by inserting into lipid bilayers inducing the leakage of ions and molecules and the enhancement of permeability that ultimately leads to cell lysis. It acts as a voltage-gated pore with higher selectivity for anions over cations. The ion conductance has been shown to be voltage-dependent. Self-association of melittin in membranes is promoted by high ionic strength, but not by the presence of negatively charged lipids. In vivo, intradermal injection into healthy human volunteers produce sharp pain sensation and an inflammatory response. It produces pain by activating primary nociceptor cells directly and indirectly due to its ability to activate plasma membrane phospholipase A2 and its pore-forming activity (By similarity). Shows lower cytotoxicity when tested on E.coli and cancer cell lines than melittin, as well as lower anti-inflammatory properties and lower properties to interact to small unilamellar liposomes (PubMed:24512991).</text>
</comment>
<comment type="subunit">
    <text evidence="1">Monomer (in solution and for integration into membranes), homotetramer (in solution and potentially as a toroidal pore in membranes), and potenially homomultimer (as a toroidal pore in membranes).</text>
</comment>
<comment type="subcellular location">
    <subcellularLocation>
        <location evidence="1">Secreted</location>
    </subcellularLocation>
    <subcellularLocation>
        <location evidence="1">Target cell membrane</location>
    </subcellularLocation>
    <text evidence="1">Alpha-helical peptides form toroidal pores in the prey.</text>
</comment>
<comment type="tissue specificity">
    <text evidence="5">Expressed by the venom gland.</text>
</comment>
<comment type="similarity">
    <text evidence="5">Belongs to the melittin family.</text>
</comment>
<reference key="1">
    <citation type="journal article" date="2014" name="Peptides">
        <title>Functional characterization of naturally occurring melittin peptide isoforms in two honey bee species, Apis mellifera and Apis cerana.</title>
        <authorList>
            <person name="Park D."/>
            <person name="Jung J.W."/>
            <person name="Lee M.O."/>
            <person name="Lee S.Y."/>
            <person name="Kim B."/>
            <person name="Jin H.J."/>
            <person name="Kim J."/>
            <person name="Ahn Y.J."/>
            <person name="Lee K.W."/>
            <person name="Song Y.S."/>
            <person name="Hong S."/>
            <person name="Womack J.E."/>
            <person name="Kwon H.W."/>
        </authorList>
    </citation>
    <scope>NUCLEOTIDE SEQUENCE [GENOMIC DNA]</scope>
    <scope>SYNTHESIS OF 44-69</scope>
    <scope>FUNCTION</scope>
    <scope>MUTAGENESIS OF ASN-61</scope>
</reference>
<proteinExistence type="evidence at protein level"/>
<feature type="signal peptide" evidence="2">
    <location>
        <begin position="1"/>
        <end position="21"/>
    </location>
</feature>
<feature type="propeptide" id="PRO_0000446007" description="Removed by a dipeptidylpeptidase" evidence="1">
    <location>
        <begin position="22"/>
        <end position="43"/>
    </location>
</feature>
<feature type="peptide" id="PRO_0000446008" description="Melittin-N" evidence="1">
    <location>
        <begin position="44"/>
        <end position="69"/>
    </location>
</feature>
<feature type="site" description="Important for the flexibility at the center of the helix, flexibility that is important for the stability of the voltage-gated pore" evidence="1">
    <location>
        <position position="57"/>
    </location>
</feature>
<feature type="modified residue" description="N-formylglycine; partial" evidence="1">
    <location>
        <position position="44"/>
    </location>
</feature>
<feature type="modified residue" description="Glutamine amide" evidence="1">
    <location>
        <position position="69"/>
    </location>
</feature>
<feature type="mutagenesis site" description="Increase in cytotoxicity when tested on E.coli and cancer cell lines, increase in anti-inflammatory properties since it inhibits more potently IL-6 and TNF-alpha (but not IL-1 beta) production in melittin-treated cells, and increase in interaction to small unilamellar liposomes." evidence="3">
    <original>N</original>
    <variation>S</variation>
    <location>
        <position position="61"/>
    </location>
</feature>
<dbReference type="SMR" id="P0DPR9"/>
<dbReference type="GO" id="GO:0005576">
    <property type="term" value="C:extracellular region"/>
    <property type="evidence" value="ECO:0007669"/>
    <property type="project" value="UniProtKB-SubCell"/>
</dbReference>
<dbReference type="GO" id="GO:0044218">
    <property type="term" value="C:other organism cell membrane"/>
    <property type="evidence" value="ECO:0007669"/>
    <property type="project" value="UniProtKB-KW"/>
</dbReference>
<dbReference type="GO" id="GO:0046930">
    <property type="term" value="C:pore complex"/>
    <property type="evidence" value="ECO:0007669"/>
    <property type="project" value="UniProtKB-KW"/>
</dbReference>
<dbReference type="GO" id="GO:0015288">
    <property type="term" value="F:porin activity"/>
    <property type="evidence" value="ECO:0007669"/>
    <property type="project" value="UniProtKB-KW"/>
</dbReference>
<dbReference type="GO" id="GO:0004860">
    <property type="term" value="F:protein kinase inhibitor activity"/>
    <property type="evidence" value="ECO:0007669"/>
    <property type="project" value="InterPro"/>
</dbReference>
<dbReference type="GO" id="GO:0090729">
    <property type="term" value="F:toxin activity"/>
    <property type="evidence" value="ECO:0007669"/>
    <property type="project" value="UniProtKB-KW"/>
</dbReference>
<dbReference type="GO" id="GO:0031640">
    <property type="term" value="P:killing of cells of another organism"/>
    <property type="evidence" value="ECO:0007669"/>
    <property type="project" value="UniProtKB-KW"/>
</dbReference>
<dbReference type="GO" id="GO:0006811">
    <property type="term" value="P:monoatomic ion transport"/>
    <property type="evidence" value="ECO:0007669"/>
    <property type="project" value="UniProtKB-KW"/>
</dbReference>
<dbReference type="InterPro" id="IPR002116">
    <property type="entry name" value="Melittin/Api_allergen"/>
</dbReference>
<dbReference type="Pfam" id="PF01372">
    <property type="entry name" value="Melittin"/>
    <property type="match status" value="1"/>
</dbReference>
<name>MELN_APICE</name>
<keyword id="KW-0020">Allergen</keyword>
<keyword id="KW-0027">Amidation</keyword>
<keyword id="KW-0929">Antimicrobial</keyword>
<keyword id="KW-0204">Cytolysis</keyword>
<keyword id="KW-0291">Formylation</keyword>
<keyword id="KW-0354">Hemolysis</keyword>
<keyword id="KW-0406">Ion transport</keyword>
<keyword id="KW-0472">Membrane</keyword>
<keyword id="KW-0626">Porin</keyword>
<keyword id="KW-0964">Secreted</keyword>
<keyword id="KW-0732">Signal</keyword>
<keyword id="KW-1052">Target cell membrane</keyword>
<keyword id="KW-1053">Target membrane</keyword>
<keyword id="KW-0800">Toxin</keyword>
<keyword id="KW-0812">Transmembrane</keyword>
<keyword id="KW-0813">Transport</keyword>
<gene>
    <name type="primary">MELT</name>
</gene>
<sequence>MKFLVNVALVFMVVYISYIYAAPEPEPAPEPEAEADAEADPEAGIGAVLKVLTTGLPALINWIKRKRQQG</sequence>
<evidence type="ECO:0000250" key="1">
    <source>
        <dbReference type="UniProtKB" id="P01501"/>
    </source>
</evidence>
<evidence type="ECO:0000255" key="2"/>
<evidence type="ECO:0000269" key="3">
    <source>
    </source>
</evidence>
<evidence type="ECO:0000303" key="4">
    <source>
    </source>
</evidence>
<evidence type="ECO:0000305" key="5"/>
<protein>
    <recommendedName>
        <fullName evidence="4">Melittin-N</fullName>
        <shortName evidence="4">MEL-N</shortName>
        <shortName>MLT</shortName>
    </recommendedName>
</protein>
<organism>
    <name type="scientific">Apis cerana</name>
    <name type="common">Indian honeybee</name>
    <dbReference type="NCBI Taxonomy" id="7461"/>
    <lineage>
        <taxon>Eukaryota</taxon>
        <taxon>Metazoa</taxon>
        <taxon>Ecdysozoa</taxon>
        <taxon>Arthropoda</taxon>
        <taxon>Hexapoda</taxon>
        <taxon>Insecta</taxon>
        <taxon>Pterygota</taxon>
        <taxon>Neoptera</taxon>
        <taxon>Endopterygota</taxon>
        <taxon>Hymenoptera</taxon>
        <taxon>Apocrita</taxon>
        <taxon>Aculeata</taxon>
        <taxon>Apoidea</taxon>
        <taxon>Anthophila</taxon>
        <taxon>Apidae</taxon>
        <taxon>Apis</taxon>
    </lineage>
</organism>
<accession>P0DPR9</accession>